<feature type="chain" id="PRO_0000195851" description="Glutamine--tRNA ligase">
    <location>
        <begin position="1"/>
        <end position="554"/>
    </location>
</feature>
<feature type="region of interest" description="Interaction with tRNA" evidence="1">
    <location>
        <begin position="317"/>
        <end position="324"/>
    </location>
</feature>
<feature type="short sequence motif" description="'HIGH' region" evidence="1">
    <location>
        <begin position="34"/>
        <end position="44"/>
    </location>
</feature>
<feature type="short sequence motif" description="'KMSKS' region" evidence="1">
    <location>
        <begin position="268"/>
        <end position="272"/>
    </location>
</feature>
<feature type="binding site" evidence="1">
    <location>
        <begin position="35"/>
        <end position="37"/>
    </location>
    <ligand>
        <name>ATP</name>
        <dbReference type="ChEBI" id="CHEBI:30616"/>
    </ligand>
</feature>
<feature type="binding site" evidence="1">
    <location>
        <begin position="41"/>
        <end position="47"/>
    </location>
    <ligand>
        <name>ATP</name>
        <dbReference type="ChEBI" id="CHEBI:30616"/>
    </ligand>
</feature>
<feature type="binding site" evidence="1">
    <location>
        <position position="67"/>
    </location>
    <ligand>
        <name>L-glutamine</name>
        <dbReference type="ChEBI" id="CHEBI:58359"/>
    </ligand>
</feature>
<feature type="binding site" evidence="1">
    <location>
        <position position="212"/>
    </location>
    <ligand>
        <name>L-glutamine</name>
        <dbReference type="ChEBI" id="CHEBI:58359"/>
    </ligand>
</feature>
<feature type="binding site" evidence="1">
    <location>
        <position position="231"/>
    </location>
    <ligand>
        <name>ATP</name>
        <dbReference type="ChEBI" id="CHEBI:30616"/>
    </ligand>
</feature>
<feature type="binding site" evidence="1">
    <location>
        <begin position="261"/>
        <end position="262"/>
    </location>
    <ligand>
        <name>ATP</name>
        <dbReference type="ChEBI" id="CHEBI:30616"/>
    </ligand>
</feature>
<feature type="binding site" evidence="1">
    <location>
        <begin position="269"/>
        <end position="271"/>
    </location>
    <ligand>
        <name>ATP</name>
        <dbReference type="ChEBI" id="CHEBI:30616"/>
    </ligand>
</feature>
<dbReference type="EC" id="6.1.1.18" evidence="1"/>
<dbReference type="EMBL" id="AE005674">
    <property type="protein sequence ID" value="AAN42251.1"/>
    <property type="molecule type" value="Genomic_DNA"/>
</dbReference>
<dbReference type="EMBL" id="AE014073">
    <property type="protein sequence ID" value="AAP16122.1"/>
    <property type="molecule type" value="Genomic_DNA"/>
</dbReference>
<dbReference type="RefSeq" id="NP_706544.1">
    <property type="nucleotide sequence ID" value="NC_004337.2"/>
</dbReference>
<dbReference type="RefSeq" id="WP_001287126.1">
    <property type="nucleotide sequence ID" value="NZ_WPGW01000002.1"/>
</dbReference>
<dbReference type="SMR" id="Q83LY4"/>
<dbReference type="STRING" id="198214.SF0613"/>
<dbReference type="PaxDb" id="198214-SF0613"/>
<dbReference type="GeneID" id="1023539"/>
<dbReference type="KEGG" id="sfl:SF0613"/>
<dbReference type="KEGG" id="sfx:S0624"/>
<dbReference type="PATRIC" id="fig|198214.7.peg.715"/>
<dbReference type="HOGENOM" id="CLU_001882_2_3_6"/>
<dbReference type="Proteomes" id="UP000001006">
    <property type="component" value="Chromosome"/>
</dbReference>
<dbReference type="Proteomes" id="UP000002673">
    <property type="component" value="Chromosome"/>
</dbReference>
<dbReference type="GO" id="GO:0005829">
    <property type="term" value="C:cytosol"/>
    <property type="evidence" value="ECO:0007669"/>
    <property type="project" value="TreeGrafter"/>
</dbReference>
<dbReference type="GO" id="GO:0005524">
    <property type="term" value="F:ATP binding"/>
    <property type="evidence" value="ECO:0007669"/>
    <property type="project" value="UniProtKB-UniRule"/>
</dbReference>
<dbReference type="GO" id="GO:0004819">
    <property type="term" value="F:glutamine-tRNA ligase activity"/>
    <property type="evidence" value="ECO:0007669"/>
    <property type="project" value="UniProtKB-UniRule"/>
</dbReference>
<dbReference type="GO" id="GO:0006425">
    <property type="term" value="P:glutaminyl-tRNA aminoacylation"/>
    <property type="evidence" value="ECO:0007669"/>
    <property type="project" value="InterPro"/>
</dbReference>
<dbReference type="GO" id="GO:0006424">
    <property type="term" value="P:glutamyl-tRNA aminoacylation"/>
    <property type="evidence" value="ECO:0007669"/>
    <property type="project" value="UniProtKB-UniRule"/>
</dbReference>
<dbReference type="CDD" id="cd00807">
    <property type="entry name" value="GlnRS_core"/>
    <property type="match status" value="1"/>
</dbReference>
<dbReference type="FunFam" id="1.10.1160.10:FF:000001">
    <property type="entry name" value="Glutamine--tRNA ligase"/>
    <property type="match status" value="1"/>
</dbReference>
<dbReference type="FunFam" id="2.40.240.10:FF:000001">
    <property type="entry name" value="Glutamine--tRNA ligase"/>
    <property type="match status" value="1"/>
</dbReference>
<dbReference type="FunFam" id="2.40.240.10:FF:000003">
    <property type="entry name" value="Glutamine--tRNA ligase"/>
    <property type="match status" value="1"/>
</dbReference>
<dbReference type="FunFam" id="3.90.800.10:FF:000001">
    <property type="entry name" value="Glutamine--tRNA ligase"/>
    <property type="match status" value="1"/>
</dbReference>
<dbReference type="FunFam" id="3.40.50.620:FF:000037">
    <property type="entry name" value="Glutamine--tRNA ligase cytoplasmic"/>
    <property type="match status" value="1"/>
</dbReference>
<dbReference type="Gene3D" id="1.10.1160.10">
    <property type="entry name" value="Glutamyl-trna Synthetase, Domain 2"/>
    <property type="match status" value="1"/>
</dbReference>
<dbReference type="Gene3D" id="3.90.800.10">
    <property type="entry name" value="Glutamyl-tRNA Synthetase, Domain 3"/>
    <property type="match status" value="1"/>
</dbReference>
<dbReference type="Gene3D" id="3.40.50.620">
    <property type="entry name" value="HUPs"/>
    <property type="match status" value="1"/>
</dbReference>
<dbReference type="Gene3D" id="2.40.240.10">
    <property type="entry name" value="Ribosomal Protein L25, Chain P"/>
    <property type="match status" value="2"/>
</dbReference>
<dbReference type="HAMAP" id="MF_00126">
    <property type="entry name" value="Gln_tRNA_synth"/>
    <property type="match status" value="1"/>
</dbReference>
<dbReference type="InterPro" id="IPR001412">
    <property type="entry name" value="aa-tRNA-synth_I_CS"/>
</dbReference>
<dbReference type="InterPro" id="IPR004514">
    <property type="entry name" value="Gln-tRNA-synth"/>
</dbReference>
<dbReference type="InterPro" id="IPR050132">
    <property type="entry name" value="Gln/Glu-tRNA_Ligase"/>
</dbReference>
<dbReference type="InterPro" id="IPR022861">
    <property type="entry name" value="Gln_tRNA_ligase_bac"/>
</dbReference>
<dbReference type="InterPro" id="IPR000924">
    <property type="entry name" value="Glu/Gln-tRNA-synth"/>
</dbReference>
<dbReference type="InterPro" id="IPR020058">
    <property type="entry name" value="Glu/Gln-tRNA-synth_Ib_cat-dom"/>
</dbReference>
<dbReference type="InterPro" id="IPR020059">
    <property type="entry name" value="Glu/Gln-tRNA-synth_Ib_codon-bd"/>
</dbReference>
<dbReference type="InterPro" id="IPR020061">
    <property type="entry name" value="Glu_tRNA_lig_a-bdl"/>
</dbReference>
<dbReference type="InterPro" id="IPR020056">
    <property type="entry name" value="Rbsml_bL25/Gln-tRNA_synth_N"/>
</dbReference>
<dbReference type="InterPro" id="IPR011035">
    <property type="entry name" value="Ribosomal_bL25/Gln-tRNA_synth"/>
</dbReference>
<dbReference type="InterPro" id="IPR014729">
    <property type="entry name" value="Rossmann-like_a/b/a_fold"/>
</dbReference>
<dbReference type="InterPro" id="IPR049437">
    <property type="entry name" value="tRNA-synt_1c_C2"/>
</dbReference>
<dbReference type="NCBIfam" id="TIGR00440">
    <property type="entry name" value="glnS"/>
    <property type="match status" value="1"/>
</dbReference>
<dbReference type="NCBIfam" id="NF011291">
    <property type="entry name" value="PRK14703.1"/>
    <property type="match status" value="1"/>
</dbReference>
<dbReference type="PANTHER" id="PTHR43097:SF5">
    <property type="entry name" value="GLUTAMATE--TRNA LIGASE"/>
    <property type="match status" value="1"/>
</dbReference>
<dbReference type="PANTHER" id="PTHR43097">
    <property type="entry name" value="GLUTAMINE-TRNA LIGASE"/>
    <property type="match status" value="1"/>
</dbReference>
<dbReference type="Pfam" id="PF00749">
    <property type="entry name" value="tRNA-synt_1c"/>
    <property type="match status" value="1"/>
</dbReference>
<dbReference type="Pfam" id="PF03950">
    <property type="entry name" value="tRNA-synt_1c_C"/>
    <property type="match status" value="1"/>
</dbReference>
<dbReference type="Pfam" id="PF20974">
    <property type="entry name" value="tRNA-synt_1c_C2"/>
    <property type="match status" value="1"/>
</dbReference>
<dbReference type="PRINTS" id="PR00987">
    <property type="entry name" value="TRNASYNTHGLU"/>
</dbReference>
<dbReference type="SUPFAM" id="SSF52374">
    <property type="entry name" value="Nucleotidylyl transferase"/>
    <property type="match status" value="1"/>
</dbReference>
<dbReference type="SUPFAM" id="SSF50715">
    <property type="entry name" value="Ribosomal protein L25-like"/>
    <property type="match status" value="1"/>
</dbReference>
<dbReference type="PROSITE" id="PS00178">
    <property type="entry name" value="AA_TRNA_LIGASE_I"/>
    <property type="match status" value="1"/>
</dbReference>
<accession>Q83LY4</accession>
<keyword id="KW-0030">Aminoacyl-tRNA synthetase</keyword>
<keyword id="KW-0067">ATP-binding</keyword>
<keyword id="KW-0963">Cytoplasm</keyword>
<keyword id="KW-0436">Ligase</keyword>
<keyword id="KW-0547">Nucleotide-binding</keyword>
<keyword id="KW-0648">Protein biosynthesis</keyword>
<keyword id="KW-1185">Reference proteome</keyword>
<comment type="catalytic activity">
    <reaction evidence="1">
        <text>tRNA(Gln) + L-glutamine + ATP = L-glutaminyl-tRNA(Gln) + AMP + diphosphate</text>
        <dbReference type="Rhea" id="RHEA:20121"/>
        <dbReference type="Rhea" id="RHEA-COMP:9662"/>
        <dbReference type="Rhea" id="RHEA-COMP:9681"/>
        <dbReference type="ChEBI" id="CHEBI:30616"/>
        <dbReference type="ChEBI" id="CHEBI:33019"/>
        <dbReference type="ChEBI" id="CHEBI:58359"/>
        <dbReference type="ChEBI" id="CHEBI:78442"/>
        <dbReference type="ChEBI" id="CHEBI:78521"/>
        <dbReference type="ChEBI" id="CHEBI:456215"/>
        <dbReference type="EC" id="6.1.1.18"/>
    </reaction>
</comment>
<comment type="subunit">
    <text evidence="1">Monomer.</text>
</comment>
<comment type="subcellular location">
    <subcellularLocation>
        <location evidence="1">Cytoplasm</location>
    </subcellularLocation>
</comment>
<comment type="similarity">
    <text evidence="1">Belongs to the class-I aminoacyl-tRNA synthetase family.</text>
</comment>
<evidence type="ECO:0000255" key="1">
    <source>
        <dbReference type="HAMAP-Rule" id="MF_00126"/>
    </source>
</evidence>
<reference key="1">
    <citation type="journal article" date="2002" name="Nucleic Acids Res.">
        <title>Genome sequence of Shigella flexneri 2a: insights into pathogenicity through comparison with genomes of Escherichia coli K12 and O157.</title>
        <authorList>
            <person name="Jin Q."/>
            <person name="Yuan Z."/>
            <person name="Xu J."/>
            <person name="Wang Y."/>
            <person name="Shen Y."/>
            <person name="Lu W."/>
            <person name="Wang J."/>
            <person name="Liu H."/>
            <person name="Yang J."/>
            <person name="Yang F."/>
            <person name="Zhang X."/>
            <person name="Zhang J."/>
            <person name="Yang G."/>
            <person name="Wu H."/>
            <person name="Qu D."/>
            <person name="Dong J."/>
            <person name="Sun L."/>
            <person name="Xue Y."/>
            <person name="Zhao A."/>
            <person name="Gao Y."/>
            <person name="Zhu J."/>
            <person name="Kan B."/>
            <person name="Ding K."/>
            <person name="Chen S."/>
            <person name="Cheng H."/>
            <person name="Yao Z."/>
            <person name="He B."/>
            <person name="Chen R."/>
            <person name="Ma D."/>
            <person name="Qiang B."/>
            <person name="Wen Y."/>
            <person name="Hou Y."/>
            <person name="Yu J."/>
        </authorList>
    </citation>
    <scope>NUCLEOTIDE SEQUENCE [LARGE SCALE GENOMIC DNA]</scope>
    <source>
        <strain>301 / Serotype 2a</strain>
    </source>
</reference>
<reference key="2">
    <citation type="journal article" date="2003" name="Infect. Immun.">
        <title>Complete genome sequence and comparative genomics of Shigella flexneri serotype 2a strain 2457T.</title>
        <authorList>
            <person name="Wei J."/>
            <person name="Goldberg M.B."/>
            <person name="Burland V."/>
            <person name="Venkatesan M.M."/>
            <person name="Deng W."/>
            <person name="Fournier G."/>
            <person name="Mayhew G.F."/>
            <person name="Plunkett G. III"/>
            <person name="Rose D.J."/>
            <person name="Darling A."/>
            <person name="Mau B."/>
            <person name="Perna N.T."/>
            <person name="Payne S.M."/>
            <person name="Runyen-Janecky L.J."/>
            <person name="Zhou S."/>
            <person name="Schwartz D.C."/>
            <person name="Blattner F.R."/>
        </authorList>
    </citation>
    <scope>NUCLEOTIDE SEQUENCE [LARGE SCALE GENOMIC DNA]</scope>
    <source>
        <strain>ATCC 700930 / 2457T / Serotype 2a</strain>
    </source>
</reference>
<gene>
    <name evidence="1" type="primary">glnS</name>
    <name type="ordered locus">SF0613</name>
    <name type="ordered locus">S0624</name>
</gene>
<organism>
    <name type="scientific">Shigella flexneri</name>
    <dbReference type="NCBI Taxonomy" id="623"/>
    <lineage>
        <taxon>Bacteria</taxon>
        <taxon>Pseudomonadati</taxon>
        <taxon>Pseudomonadota</taxon>
        <taxon>Gammaproteobacteria</taxon>
        <taxon>Enterobacterales</taxon>
        <taxon>Enterobacteriaceae</taxon>
        <taxon>Shigella</taxon>
    </lineage>
</organism>
<name>SYQ_SHIFL</name>
<protein>
    <recommendedName>
        <fullName evidence="1">Glutamine--tRNA ligase</fullName>
        <ecNumber evidence="1">6.1.1.18</ecNumber>
    </recommendedName>
    <alternativeName>
        <fullName evidence="1">Glutaminyl-tRNA synthetase</fullName>
        <shortName evidence="1">GlnRS</shortName>
    </alternativeName>
</protein>
<sequence length="554" mass="63476">MSEAEARPTNFIRQIIDEDLASGKHITVHTRFPPEPNGYLHIGHAKSICLNFGIAQDYKGQCNLRFDDTNPVKEDIEYVDSIKNDVEWLGFHWSGNVRYSSDYFDQLHAYAIELINKGLAYVDELTPEQIREYRGTLTQPGKNSPYRDRSVEENLALFEKMRAGGFEEGKACLRAKIDMASPFIVMRDPVLYRIKFAEHHQTGNKWCIYPMYDFTHCISDALEGITHSLCTLEFQDNRRLYDWVLDNITIPVHPRQYEFSRLNLEYTVMSKRKLNLLVTDKHVEGWDDPRMPTISGLRRRGYTAASIREFCKRIGVTKQDNTIEMASLESCIREDLNENAPRAMAVIDPVKLVIENYQGEGEMVTMPNHPNKPEMGSRQVPFSGEIWIDRADFREEANKQYKRLVLGKEVRLRNAYVIKAERVEKDAEGNITTIFCTYDADTLSKDPADGRKVKGVIHWVSAAHALPVEIRLYDRLFSVPNPGAADDFLSVINPESLVIKQGFAEPSLKDAVAGKAFQFEREGYFCLDSRHSTAEKPVFNRTVGLRDTWAKVGE</sequence>
<proteinExistence type="inferred from homology"/>